<comment type="function">
    <text evidence="1">High affinity, high specificity proton-dependent sulfate transporter, which mediates sulfate uptake. Provides the sulfur source for the cysteine synthesis pathway.</text>
</comment>
<comment type="subcellular location">
    <subcellularLocation>
        <location evidence="1">Cell inner membrane</location>
        <topology evidence="1">Multi-pass membrane protein</topology>
    </subcellularLocation>
</comment>
<comment type="similarity">
    <text evidence="1">Belongs to the CysZ family.</text>
</comment>
<dbReference type="EMBL" id="CP000948">
    <property type="protein sequence ID" value="ACB03564.1"/>
    <property type="molecule type" value="Genomic_DNA"/>
</dbReference>
<dbReference type="RefSeq" id="WP_000254839.1">
    <property type="nucleotide sequence ID" value="NC_010473.1"/>
</dbReference>
<dbReference type="SMR" id="B1XA84"/>
<dbReference type="GeneID" id="93774718"/>
<dbReference type="KEGG" id="ecd:ECDH10B_2578"/>
<dbReference type="HOGENOM" id="CLU_070331_1_0_6"/>
<dbReference type="GO" id="GO:0005886">
    <property type="term" value="C:plasma membrane"/>
    <property type="evidence" value="ECO:0007669"/>
    <property type="project" value="UniProtKB-SubCell"/>
</dbReference>
<dbReference type="GO" id="GO:0009675">
    <property type="term" value="F:high-affinity sulfate:proton symporter activity"/>
    <property type="evidence" value="ECO:0007669"/>
    <property type="project" value="TreeGrafter"/>
</dbReference>
<dbReference type="GO" id="GO:0019344">
    <property type="term" value="P:cysteine biosynthetic process"/>
    <property type="evidence" value="ECO:0007669"/>
    <property type="project" value="UniProtKB-UniRule"/>
</dbReference>
<dbReference type="GO" id="GO:0000103">
    <property type="term" value="P:sulfate assimilation"/>
    <property type="evidence" value="ECO:0007669"/>
    <property type="project" value="InterPro"/>
</dbReference>
<dbReference type="HAMAP" id="MF_00468">
    <property type="entry name" value="CysZ"/>
    <property type="match status" value="1"/>
</dbReference>
<dbReference type="InterPro" id="IPR050480">
    <property type="entry name" value="CysZ_sulfate_transptr"/>
</dbReference>
<dbReference type="InterPro" id="IPR022985">
    <property type="entry name" value="Sulfate_CysZ"/>
</dbReference>
<dbReference type="NCBIfam" id="NF003433">
    <property type="entry name" value="PRK04949.1"/>
    <property type="match status" value="1"/>
</dbReference>
<dbReference type="PANTHER" id="PTHR37468">
    <property type="entry name" value="SULFATE TRANSPORTER CYSZ"/>
    <property type="match status" value="1"/>
</dbReference>
<dbReference type="PANTHER" id="PTHR37468:SF1">
    <property type="entry name" value="SULFATE TRANSPORTER CYSZ"/>
    <property type="match status" value="1"/>
</dbReference>
<dbReference type="Pfam" id="PF07264">
    <property type="entry name" value="EI24"/>
    <property type="match status" value="1"/>
</dbReference>
<protein>
    <recommendedName>
        <fullName evidence="1">Sulfate transporter CysZ</fullName>
    </recommendedName>
</protein>
<evidence type="ECO:0000255" key="1">
    <source>
        <dbReference type="HAMAP-Rule" id="MF_00468"/>
    </source>
</evidence>
<organism>
    <name type="scientific">Escherichia coli (strain K12 / DH10B)</name>
    <dbReference type="NCBI Taxonomy" id="316385"/>
    <lineage>
        <taxon>Bacteria</taxon>
        <taxon>Pseudomonadati</taxon>
        <taxon>Pseudomonadota</taxon>
        <taxon>Gammaproteobacteria</taxon>
        <taxon>Enterobacterales</taxon>
        <taxon>Enterobacteriaceae</taxon>
        <taxon>Escherichia</taxon>
    </lineage>
</organism>
<accession>B1XA84</accession>
<proteinExistence type="inferred from homology"/>
<keyword id="KW-0028">Amino-acid biosynthesis</keyword>
<keyword id="KW-0997">Cell inner membrane</keyword>
<keyword id="KW-1003">Cell membrane</keyword>
<keyword id="KW-0198">Cysteine biosynthesis</keyword>
<keyword id="KW-0472">Membrane</keyword>
<keyword id="KW-0764">Sulfate transport</keyword>
<keyword id="KW-0812">Transmembrane</keyword>
<keyword id="KW-1133">Transmembrane helix</keyword>
<keyword id="KW-0813">Transport</keyword>
<name>CYSZ_ECODH</name>
<gene>
    <name evidence="1" type="primary">cysZ</name>
    <name type="ordered locus">ECDH10B_2578</name>
</gene>
<sequence length="253" mass="29305">MVSSFTSAPRSGFYYFAQGWKLVSQPGIRRFVILPLLVNILLMGGAFWWLFTQLDVWIPTLMSYVPDWLQWLSYLLWPLAVISVLLVFGYFFSTIANWIAAPFNGLLAEQLEARLTGATPPDTGIFGIMKDVPRIMKREWQKFAWYLPRAIVLLILYFIPGIGQTVAPVLWFLFSAWMLAIQYCDYPFDNHKVPFKEMRTALRTRKITNMQFGALTSLFTMIPLLNLFIMPVAVCGATAMWVDCYRDKHAMWR</sequence>
<feature type="chain" id="PRO_1000125496" description="Sulfate transporter CysZ">
    <location>
        <begin position="1"/>
        <end position="253"/>
    </location>
</feature>
<feature type="transmembrane region" description="Helical" evidence="1">
    <location>
        <begin position="31"/>
        <end position="51"/>
    </location>
</feature>
<feature type="transmembrane region" description="Helical" evidence="1">
    <location>
        <begin position="75"/>
        <end position="95"/>
    </location>
</feature>
<feature type="transmembrane region" description="Helical" evidence="1">
    <location>
        <begin position="151"/>
        <end position="171"/>
    </location>
</feature>
<feature type="transmembrane region" description="Helical" evidence="1">
    <location>
        <begin position="222"/>
        <end position="242"/>
    </location>
</feature>
<reference key="1">
    <citation type="journal article" date="2008" name="J. Bacteriol.">
        <title>The complete genome sequence of Escherichia coli DH10B: insights into the biology of a laboratory workhorse.</title>
        <authorList>
            <person name="Durfee T."/>
            <person name="Nelson R."/>
            <person name="Baldwin S."/>
            <person name="Plunkett G. III"/>
            <person name="Burland V."/>
            <person name="Mau B."/>
            <person name="Petrosino J.F."/>
            <person name="Qin X."/>
            <person name="Muzny D.M."/>
            <person name="Ayele M."/>
            <person name="Gibbs R.A."/>
            <person name="Csorgo B."/>
            <person name="Posfai G."/>
            <person name="Weinstock G.M."/>
            <person name="Blattner F.R."/>
        </authorList>
    </citation>
    <scope>NUCLEOTIDE SEQUENCE [LARGE SCALE GENOMIC DNA]</scope>
    <source>
        <strain>K12 / DH10B</strain>
    </source>
</reference>